<name>ALBA_THEKO</name>
<protein>
    <recommendedName>
        <fullName evidence="1">DNA/RNA-binding protein Alba</fullName>
    </recommendedName>
</protein>
<dbReference type="EMBL" id="AP006878">
    <property type="protein sequence ID" value="BAD84749.1"/>
    <property type="molecule type" value="Genomic_DNA"/>
</dbReference>
<dbReference type="RefSeq" id="WP_011249515.1">
    <property type="nucleotide sequence ID" value="NC_006624.1"/>
</dbReference>
<dbReference type="SMR" id="Q5JF39"/>
<dbReference type="FunCoup" id="Q5JF39">
    <property type="interactions" value="1"/>
</dbReference>
<dbReference type="STRING" id="69014.TK0560"/>
<dbReference type="EnsemblBacteria" id="BAD84749">
    <property type="protein sequence ID" value="BAD84749"/>
    <property type="gene ID" value="TK0560"/>
</dbReference>
<dbReference type="GeneID" id="78447074"/>
<dbReference type="KEGG" id="tko:TK0560"/>
<dbReference type="PATRIC" id="fig|69014.16.peg.547"/>
<dbReference type="eggNOG" id="arCOG01753">
    <property type="taxonomic scope" value="Archaea"/>
</dbReference>
<dbReference type="HOGENOM" id="CLU_110989_1_0_2"/>
<dbReference type="InParanoid" id="Q5JF39"/>
<dbReference type="OrthoDB" id="10360at2157"/>
<dbReference type="PhylomeDB" id="Q5JF39"/>
<dbReference type="Proteomes" id="UP000000536">
    <property type="component" value="Chromosome"/>
</dbReference>
<dbReference type="GO" id="GO:0005694">
    <property type="term" value="C:chromosome"/>
    <property type="evidence" value="ECO:0007669"/>
    <property type="project" value="UniProtKB-SubCell"/>
</dbReference>
<dbReference type="GO" id="GO:0005737">
    <property type="term" value="C:cytoplasm"/>
    <property type="evidence" value="ECO:0007669"/>
    <property type="project" value="UniProtKB-SubCell"/>
</dbReference>
<dbReference type="GO" id="GO:0003690">
    <property type="term" value="F:double-stranded DNA binding"/>
    <property type="evidence" value="ECO:0007669"/>
    <property type="project" value="UniProtKB-UniRule"/>
</dbReference>
<dbReference type="GO" id="GO:0003723">
    <property type="term" value="F:RNA binding"/>
    <property type="evidence" value="ECO:0000318"/>
    <property type="project" value="GO_Central"/>
</dbReference>
<dbReference type="Gene3D" id="3.30.110.20">
    <property type="entry name" value="Alba-like domain"/>
    <property type="match status" value="1"/>
</dbReference>
<dbReference type="HAMAP" id="MF_01122">
    <property type="entry name" value="AlbA"/>
    <property type="match status" value="1"/>
</dbReference>
<dbReference type="InterPro" id="IPR036882">
    <property type="entry name" value="Alba-like_dom_sf"/>
</dbReference>
<dbReference type="InterPro" id="IPR013795">
    <property type="entry name" value="DNA/RNA-bd_Alba"/>
</dbReference>
<dbReference type="InterPro" id="IPR002775">
    <property type="entry name" value="DNA/RNA-bd_Alba-like"/>
</dbReference>
<dbReference type="NCBIfam" id="TIGR00285">
    <property type="entry name" value="DNA-binding protein Alba"/>
    <property type="match status" value="1"/>
</dbReference>
<dbReference type="NCBIfam" id="NF003088">
    <property type="entry name" value="PRK04015.1"/>
    <property type="match status" value="1"/>
</dbReference>
<dbReference type="Pfam" id="PF01918">
    <property type="entry name" value="Alba"/>
    <property type="match status" value="1"/>
</dbReference>
<dbReference type="PIRSF" id="PIRSF028732">
    <property type="entry name" value="Alba"/>
    <property type="match status" value="1"/>
</dbReference>
<dbReference type="SUPFAM" id="SSF82704">
    <property type="entry name" value="AlbA-like"/>
    <property type="match status" value="1"/>
</dbReference>
<organism>
    <name type="scientific">Thermococcus kodakarensis (strain ATCC BAA-918 / JCM 12380 / KOD1)</name>
    <name type="common">Pyrococcus kodakaraensis (strain KOD1)</name>
    <dbReference type="NCBI Taxonomy" id="69014"/>
    <lineage>
        <taxon>Archaea</taxon>
        <taxon>Methanobacteriati</taxon>
        <taxon>Methanobacteriota</taxon>
        <taxon>Thermococci</taxon>
        <taxon>Thermococcales</taxon>
        <taxon>Thermococcaceae</taxon>
        <taxon>Thermococcus</taxon>
    </lineage>
</organism>
<accession>Q5JF39</accession>
<evidence type="ECO:0000255" key="1">
    <source>
        <dbReference type="HAMAP-Rule" id="MF_01122"/>
    </source>
</evidence>
<evidence type="ECO:0000269" key="2">
    <source>
    </source>
</evidence>
<evidence type="ECO:0000305" key="3">
    <source>
    </source>
</evidence>
<reference key="1">
    <citation type="journal article" date="2005" name="Genome Res.">
        <title>Complete genome sequence of the hyperthermophilic archaeon Thermococcus kodakaraensis KOD1 and comparison with Pyrococcus genomes.</title>
        <authorList>
            <person name="Fukui T."/>
            <person name="Atomi H."/>
            <person name="Kanai T."/>
            <person name="Matsumi R."/>
            <person name="Fujiwara S."/>
            <person name="Imanaka T."/>
        </authorList>
    </citation>
    <scope>NUCLEOTIDE SEQUENCE [LARGE SCALE GENOMIC DNA]</scope>
    <source>
        <strain>ATCC BAA-918 / JCM 12380 / KOD1</strain>
    </source>
</reference>
<reference key="2">
    <citation type="journal article" date="2011" name="Mol. Biol. Cell">
        <title>Histone and TK0471/TrmBL2 form a novel heterogeneous genome architecture in the hyperthermophilic archaeon Thermococcus kodakarensis.</title>
        <authorList>
            <person name="Maruyama H."/>
            <person name="Shin M."/>
            <person name="Oda T."/>
            <person name="Matsumi R."/>
            <person name="Ohniwa R.L."/>
            <person name="Itoh T."/>
            <person name="Shirahige K."/>
            <person name="Imanaka T."/>
            <person name="Atomi H."/>
            <person name="Yoshimura S.H."/>
            <person name="Takeyasu K."/>
        </authorList>
    </citation>
    <scope>FUNCTION</scope>
    <scope>IDENTIFICATION BY MASS SPECTROMETRY</scope>
    <scope>SUBCELLULAR LOCATION</scope>
    <scope>DNA-BINDING</scope>
    <source>
        <strain>ATCC BAA-918 / JCM 12380 / KOD1</strain>
    </source>
</reference>
<proteinExistence type="evidence at protein level"/>
<feature type="chain" id="PRO_0000151708" description="DNA/RNA-binding protein Alba">
    <location>
        <begin position="1"/>
        <end position="91"/>
    </location>
</feature>
<feature type="modified residue" description="N6-acetyllysine" evidence="1">
    <location>
        <position position="11"/>
    </location>
</feature>
<sequence>MAEEHVVYIGKKPVMNYVLAVITQFNEGAKEVSIRARGRAISRAVDVAEIVRNRFLPEVRVKEIKIGTEELPTADGRTANTSTIEIILEKP</sequence>
<comment type="function">
    <text evidence="1 2">Binds double-stranded DNA tightly but without sequence specificity (By similarity). Incubation with DNA in vitro gives fibrous structures 10.3 +/- 1.1 nm in thickness (naked DNA is 1.83 +/- 0.37 nm) (PubMed:21148291). This protein does not significantly compact DNA (PubMed:21148291).</text>
</comment>
<comment type="subcellular location">
    <subcellularLocation>
        <location evidence="1 3">Cytoplasm</location>
    </subcellularLocation>
    <subcellularLocation>
        <location evidence="1 2">Chromosome</location>
    </subcellularLocation>
</comment>
<comment type="PTM">
    <text evidence="1">Acetylated. Acetylation at Lys-11 decreases DNA-binding affinity.</text>
</comment>
<comment type="similarity">
    <text evidence="1">Belongs to the histone-like Alba family.</text>
</comment>
<keyword id="KW-0007">Acetylation</keyword>
<keyword id="KW-0158">Chromosome</keyword>
<keyword id="KW-0963">Cytoplasm</keyword>
<keyword id="KW-0238">DNA-binding</keyword>
<keyword id="KW-1185">Reference proteome</keyword>
<gene>
    <name evidence="1" type="primary">albA</name>
    <name type="ordered locus">TK0560</name>
</gene>